<evidence type="ECO:0000255" key="1">
    <source>
        <dbReference type="HAMAP-Rule" id="MF_01869"/>
    </source>
</evidence>
<keyword id="KW-0997">Cell inner membrane</keyword>
<keyword id="KW-1003">Cell membrane</keyword>
<keyword id="KW-0441">Lipid A biosynthesis</keyword>
<keyword id="KW-0444">Lipid biosynthesis</keyword>
<keyword id="KW-0443">Lipid metabolism</keyword>
<keyword id="KW-0448">Lipopolysaccharide biosynthesis</keyword>
<keyword id="KW-0472">Membrane</keyword>
<keyword id="KW-0812">Transmembrane</keyword>
<keyword id="KW-1133">Transmembrane helix</keyword>
<keyword id="KW-0813">Transport</keyword>
<proteinExistence type="inferred from homology"/>
<comment type="function">
    <text evidence="1">Translocates 4-amino-4-deoxy-L-arabinose-phosphoundecaprenol (alpha-L-Ara4N-phosphoundecaprenol) from the cytoplasmic to the periplasmic side of the inner membrane.</text>
</comment>
<comment type="pathway">
    <text evidence="1">Bacterial outer membrane biogenesis; lipopolysaccharide biosynthesis.</text>
</comment>
<comment type="subunit">
    <text evidence="1">Heterodimer of ArnE and ArnF.</text>
</comment>
<comment type="subcellular location">
    <subcellularLocation>
        <location evidence="1">Cell inner membrane</location>
        <topology evidence="1">Multi-pass membrane protein</topology>
    </subcellularLocation>
</comment>
<comment type="similarity">
    <text evidence="1">Belongs to the ArnE family.</text>
</comment>
<gene>
    <name evidence="1" type="primary">arnE</name>
    <name type="ordered locus">HDEF_0860</name>
</gene>
<name>ARNE_HAMD5</name>
<sequence>MNHYLLLLFVIFLTCAGQLSQKQATHSWKENAKRQTLIWLGLSVIFLAGGMLLWLKLLQYLPLSQAYPFLSINLILVTLSGHFFFKEKVTLQHWLGIGIMMVGILLLGQGI</sequence>
<reference key="1">
    <citation type="journal article" date="2009" name="Proc. Natl. Acad. Sci. U.S.A.">
        <title>Hamiltonella defensa, genome evolution of protective bacterial endosymbiont from pathogenic ancestors.</title>
        <authorList>
            <person name="Degnan P.H."/>
            <person name="Yu Y."/>
            <person name="Sisneros N."/>
            <person name="Wing R.A."/>
            <person name="Moran N.A."/>
        </authorList>
    </citation>
    <scope>NUCLEOTIDE SEQUENCE [LARGE SCALE GENOMIC DNA]</scope>
    <source>
        <strain>5AT</strain>
    </source>
</reference>
<organism>
    <name type="scientific">Hamiltonella defensa subsp. Acyrthosiphon pisum (strain 5AT)</name>
    <dbReference type="NCBI Taxonomy" id="572265"/>
    <lineage>
        <taxon>Bacteria</taxon>
        <taxon>Pseudomonadati</taxon>
        <taxon>Pseudomonadota</taxon>
        <taxon>Gammaproteobacteria</taxon>
        <taxon>Enterobacterales</taxon>
        <taxon>Enterobacteriaceae</taxon>
        <taxon>aphid secondary symbionts</taxon>
        <taxon>Candidatus Hamiltonella</taxon>
    </lineage>
</organism>
<dbReference type="EMBL" id="CP001277">
    <property type="protein sequence ID" value="ACQ67580.1"/>
    <property type="molecule type" value="Genomic_DNA"/>
</dbReference>
<dbReference type="RefSeq" id="WP_015873395.1">
    <property type="nucleotide sequence ID" value="NC_012751.1"/>
</dbReference>
<dbReference type="SMR" id="C4K4T7"/>
<dbReference type="STRING" id="572265.HDEF_0860"/>
<dbReference type="GeneID" id="66260694"/>
<dbReference type="KEGG" id="hde:HDEF_0860"/>
<dbReference type="eggNOG" id="COG2076">
    <property type="taxonomic scope" value="Bacteria"/>
</dbReference>
<dbReference type="HOGENOM" id="CLU_131462_5_1_6"/>
<dbReference type="UniPathway" id="UPA00030"/>
<dbReference type="Proteomes" id="UP000002334">
    <property type="component" value="Chromosome"/>
</dbReference>
<dbReference type="GO" id="GO:0005886">
    <property type="term" value="C:plasma membrane"/>
    <property type="evidence" value="ECO:0007669"/>
    <property type="project" value="UniProtKB-SubCell"/>
</dbReference>
<dbReference type="GO" id="GO:1901505">
    <property type="term" value="F:carbohydrate derivative transmembrane transporter activity"/>
    <property type="evidence" value="ECO:0007669"/>
    <property type="project" value="InterPro"/>
</dbReference>
<dbReference type="GO" id="GO:0009245">
    <property type="term" value="P:lipid A biosynthetic process"/>
    <property type="evidence" value="ECO:0007669"/>
    <property type="project" value="UniProtKB-UniRule"/>
</dbReference>
<dbReference type="GO" id="GO:0009103">
    <property type="term" value="P:lipopolysaccharide biosynthetic process"/>
    <property type="evidence" value="ECO:0007669"/>
    <property type="project" value="UniProtKB-UniRule"/>
</dbReference>
<dbReference type="Gene3D" id="1.10.3730.20">
    <property type="match status" value="1"/>
</dbReference>
<dbReference type="HAMAP" id="MF_01869">
    <property type="entry name" value="Flippase_ArnE"/>
    <property type="match status" value="1"/>
</dbReference>
<dbReference type="InterPro" id="IPR000620">
    <property type="entry name" value="EamA_dom"/>
</dbReference>
<dbReference type="InterPro" id="IPR022883">
    <property type="entry name" value="Flippase_ArnE"/>
</dbReference>
<dbReference type="InterPro" id="IPR000390">
    <property type="entry name" value="Small_drug/metabolite_transptr"/>
</dbReference>
<dbReference type="NCBIfam" id="NF011625">
    <property type="entry name" value="PRK15051.1"/>
    <property type="match status" value="1"/>
</dbReference>
<dbReference type="PANTHER" id="PTHR30561:SF23">
    <property type="entry name" value="4-AMINO-4-DEOXY-L-ARABINOSE-PHOSPHOUNDECAPRENOL FLIPPASE SUBUNIT ARNE-RELATED"/>
    <property type="match status" value="1"/>
</dbReference>
<dbReference type="PANTHER" id="PTHR30561">
    <property type="entry name" value="SMR FAMILY PROTON-DEPENDENT DRUG EFFLUX TRANSPORTER SUGE"/>
    <property type="match status" value="1"/>
</dbReference>
<dbReference type="Pfam" id="PF00892">
    <property type="entry name" value="EamA"/>
    <property type="match status" value="1"/>
</dbReference>
<dbReference type="SUPFAM" id="SSF103481">
    <property type="entry name" value="Multidrug resistance efflux transporter EmrE"/>
    <property type="match status" value="1"/>
</dbReference>
<accession>C4K4T7</accession>
<feature type="chain" id="PRO_0000382976" description="Probable 4-amino-4-deoxy-L-arabinose-phosphoundecaprenol flippase subunit ArnE">
    <location>
        <begin position="1"/>
        <end position="111"/>
    </location>
</feature>
<feature type="transmembrane region" description="Helical" evidence="1">
    <location>
        <begin position="37"/>
        <end position="57"/>
    </location>
</feature>
<feature type="transmembrane region" description="Helical" evidence="1">
    <location>
        <begin position="65"/>
        <end position="85"/>
    </location>
</feature>
<feature type="transmembrane region" description="Helical" evidence="1">
    <location>
        <begin position="91"/>
        <end position="111"/>
    </location>
</feature>
<protein>
    <recommendedName>
        <fullName evidence="1">Probable 4-amino-4-deoxy-L-arabinose-phosphoundecaprenol flippase subunit ArnE</fullName>
        <shortName evidence="1">L-Ara4N-phosphoundecaprenol flippase subunit ArnE</shortName>
    </recommendedName>
    <alternativeName>
        <fullName evidence="1">Undecaprenyl phosphate-aminoarabinose flippase subunit ArnE</fullName>
    </alternativeName>
</protein>